<reference key="1">
    <citation type="submission" date="1996-06" db="EMBL/GenBank/DDBJ databases">
        <title>Nucleotide sequence of the ribosomal protein genes S4e and L5 in the archaeon Thermoplasma acidophilum.</title>
        <authorList>
            <person name="Thomas N.A."/>
            <person name="Jarrell K.F."/>
        </authorList>
    </citation>
    <scope>NUCLEOTIDE SEQUENCE [GENOMIC DNA]</scope>
</reference>
<reference key="2">
    <citation type="journal article" date="2000" name="Nature">
        <title>The genome sequence of the thermoacidophilic scavenger Thermoplasma acidophilum.</title>
        <authorList>
            <person name="Ruepp A."/>
            <person name="Graml W."/>
            <person name="Santos-Martinez M.-L."/>
            <person name="Koretke K.K."/>
            <person name="Volker C."/>
            <person name="Mewes H.-W."/>
            <person name="Frishman D."/>
            <person name="Stocker S."/>
            <person name="Lupas A.N."/>
            <person name="Baumeister W."/>
        </authorList>
    </citation>
    <scope>NUCLEOTIDE SEQUENCE [LARGE SCALE GENOMIC DNA]</scope>
    <source>
        <strain>ATCC 25905 / DSM 1728 / JCM 9062 / NBRC 15155 / AMRC-C165</strain>
    </source>
</reference>
<protein>
    <recommendedName>
        <fullName evidence="1">Small ribosomal subunit protein eS4</fullName>
    </recommendedName>
    <alternativeName>
        <fullName>30S ribosomal protein S4e</fullName>
    </alternativeName>
</protein>
<feature type="chain" id="PRO_0000130865" description="Small ribosomal subunit protein eS4">
    <location>
        <begin position="1"/>
        <end position="235"/>
    </location>
</feature>
<feature type="domain" description="S4 RNA-binding">
    <location>
        <begin position="38"/>
        <end position="99"/>
    </location>
</feature>
<feature type="helix" evidence="2">
    <location>
        <begin position="40"/>
        <end position="49"/>
    </location>
</feature>
<feature type="turn" evidence="2">
    <location>
        <begin position="50"/>
        <end position="52"/>
    </location>
</feature>
<feature type="helix" evidence="2">
    <location>
        <begin position="54"/>
        <end position="56"/>
    </location>
</feature>
<feature type="helix" evidence="2">
    <location>
        <begin position="57"/>
        <end position="62"/>
    </location>
</feature>
<feature type="strand" evidence="2">
    <location>
        <begin position="66"/>
        <end position="68"/>
    </location>
</feature>
<feature type="strand" evidence="2">
    <location>
        <begin position="85"/>
        <end position="88"/>
    </location>
</feature>
<feature type="strand" evidence="2">
    <location>
        <begin position="91"/>
        <end position="97"/>
    </location>
</feature>
<feature type="strand" evidence="2">
    <location>
        <begin position="103"/>
        <end position="107"/>
    </location>
</feature>
<feature type="helix" evidence="2">
    <location>
        <begin position="112"/>
        <end position="114"/>
    </location>
</feature>
<feature type="strand" evidence="2">
    <location>
        <begin position="115"/>
        <end position="126"/>
    </location>
</feature>
<feature type="helix" evidence="2">
    <location>
        <begin position="127"/>
        <end position="129"/>
    </location>
</feature>
<feature type="strand" evidence="2">
    <location>
        <begin position="130"/>
        <end position="135"/>
    </location>
</feature>
<feature type="strand" evidence="2">
    <location>
        <begin position="140"/>
        <end position="143"/>
    </location>
</feature>
<feature type="strand" evidence="2">
    <location>
        <begin position="153"/>
        <end position="157"/>
    </location>
</feature>
<feature type="turn" evidence="2">
    <location>
        <begin position="158"/>
        <end position="160"/>
    </location>
</feature>
<feature type="strand" evidence="2">
    <location>
        <begin position="163"/>
        <end position="167"/>
    </location>
</feature>
<feature type="strand" evidence="2">
    <location>
        <begin position="174"/>
        <end position="177"/>
    </location>
</feature>
<feature type="turn" evidence="2">
    <location>
        <begin position="181"/>
        <end position="184"/>
    </location>
</feature>
<feature type="strand" evidence="2">
    <location>
        <begin position="186"/>
        <end position="192"/>
    </location>
</feature>
<feature type="strand" evidence="2">
    <location>
        <begin position="202"/>
        <end position="205"/>
    </location>
</feature>
<feature type="turn" evidence="2">
    <location>
        <begin position="206"/>
        <end position="208"/>
    </location>
</feature>
<feature type="strand" evidence="2">
    <location>
        <begin position="209"/>
        <end position="212"/>
    </location>
</feature>
<feature type="helix" evidence="2">
    <location>
        <begin position="213"/>
        <end position="215"/>
    </location>
</feature>
<feature type="strand" evidence="2">
    <location>
        <begin position="216"/>
        <end position="220"/>
    </location>
</feature>
<gene>
    <name type="primary">rps4e</name>
    <name type="ordered locus">Ta1259</name>
</gene>
<proteinExistence type="evidence at protein level"/>
<sequence length="235" mass="26266">MINKTKRLMVSRQVKIPRKTYFWGPTPNPGMHPKDQSVTLLSIIRDYLKLSDKEREAARILANGLVKVDGKTVREKKFAVGFMDVIEINGESYRVVYNDQGALVLMKETKERASMKLLKVRSKVIAPGNRIQLGTHDGRTFITDDKSKKVGDVWAVSVPDMKISEIIKMQPGNKAYITAGSHVNQTGTISKIEAKEGSSANLVHFQEGFSTIKDHVFMIGSSKFSFVLSPEEVIP</sequence>
<comment type="similarity">
    <text evidence="1">Belongs to the eukaryotic ribosomal protein eS4 family.</text>
</comment>
<comment type="sequence caution" evidence="1">
    <conflict type="erroneous initiation">
        <sequence resource="EMBL-CDS" id="AAB02244"/>
    </conflict>
</comment>
<comment type="sequence caution" evidence="1">
    <conflict type="erroneous initiation">
        <sequence resource="EMBL-CDS" id="CAC12383"/>
    </conflict>
</comment>
<keyword id="KW-0002">3D-structure</keyword>
<keyword id="KW-1185">Reference proteome</keyword>
<keyword id="KW-0687">Ribonucleoprotein</keyword>
<keyword id="KW-0689">Ribosomal protein</keyword>
<keyword id="KW-0694">RNA-binding</keyword>
<keyword id="KW-0699">rRNA-binding</keyword>
<name>RS4E_THEAC</name>
<dbReference type="EMBL" id="U57643">
    <property type="protein sequence ID" value="AAB02244.1"/>
    <property type="status" value="ALT_INIT"/>
    <property type="molecule type" value="Genomic_DNA"/>
</dbReference>
<dbReference type="EMBL" id="AL445067">
    <property type="protein sequence ID" value="CAC12383.1"/>
    <property type="status" value="ALT_INIT"/>
    <property type="molecule type" value="Genomic_DNA"/>
</dbReference>
<dbReference type="PIR" id="T37467">
    <property type="entry name" value="T37467"/>
</dbReference>
<dbReference type="RefSeq" id="WP_048162044.1">
    <property type="nucleotide sequence ID" value="NC_002578.1"/>
</dbReference>
<dbReference type="PDB" id="3KBG">
    <property type="method" value="X-ray"/>
    <property type="resolution" value="1.75 A"/>
    <property type="chains" value="A=31-235"/>
</dbReference>
<dbReference type="PDBsum" id="3KBG"/>
<dbReference type="SMR" id="Q56230"/>
<dbReference type="FunCoup" id="Q56230">
    <property type="interactions" value="138"/>
</dbReference>
<dbReference type="STRING" id="273075.gene:9572482"/>
<dbReference type="PaxDb" id="273075-Ta1259"/>
<dbReference type="DNASU" id="1456748"/>
<dbReference type="EnsemblBacteria" id="CAC12383">
    <property type="protein sequence ID" value="CAC12383"/>
    <property type="gene ID" value="CAC12383"/>
</dbReference>
<dbReference type="KEGG" id="tac:Ta1259"/>
<dbReference type="eggNOG" id="arCOG04093">
    <property type="taxonomic scope" value="Archaea"/>
</dbReference>
<dbReference type="HOGENOM" id="CLU_060400_0_0_2"/>
<dbReference type="InParanoid" id="Q56230"/>
<dbReference type="OrthoDB" id="372073at2157"/>
<dbReference type="EvolutionaryTrace" id="Q56230"/>
<dbReference type="Proteomes" id="UP000001024">
    <property type="component" value="Chromosome"/>
</dbReference>
<dbReference type="GO" id="GO:0022627">
    <property type="term" value="C:cytosolic small ribosomal subunit"/>
    <property type="evidence" value="ECO:0007669"/>
    <property type="project" value="TreeGrafter"/>
</dbReference>
<dbReference type="GO" id="GO:0019843">
    <property type="term" value="F:rRNA binding"/>
    <property type="evidence" value="ECO:0007669"/>
    <property type="project" value="UniProtKB-KW"/>
</dbReference>
<dbReference type="GO" id="GO:0003735">
    <property type="term" value="F:structural constituent of ribosome"/>
    <property type="evidence" value="ECO:0007669"/>
    <property type="project" value="InterPro"/>
</dbReference>
<dbReference type="GO" id="GO:0006412">
    <property type="term" value="P:translation"/>
    <property type="evidence" value="ECO:0007669"/>
    <property type="project" value="UniProtKB-UniRule"/>
</dbReference>
<dbReference type="CDD" id="cd06087">
    <property type="entry name" value="KOW_RPS4"/>
    <property type="match status" value="1"/>
</dbReference>
<dbReference type="CDD" id="cd00165">
    <property type="entry name" value="S4"/>
    <property type="match status" value="1"/>
</dbReference>
<dbReference type="Gene3D" id="2.30.30.30">
    <property type="match status" value="1"/>
</dbReference>
<dbReference type="Gene3D" id="2.40.50.740">
    <property type="match status" value="1"/>
</dbReference>
<dbReference type="Gene3D" id="3.10.290.10">
    <property type="entry name" value="RNA-binding S4 domain"/>
    <property type="match status" value="1"/>
</dbReference>
<dbReference type="HAMAP" id="MF_00485">
    <property type="entry name" value="Ribosomal_eS4"/>
    <property type="match status" value="1"/>
</dbReference>
<dbReference type="InterPro" id="IPR014722">
    <property type="entry name" value="Rib_uL2_dom2"/>
</dbReference>
<dbReference type="InterPro" id="IPR000876">
    <property type="entry name" value="Ribosomal_eS4"/>
</dbReference>
<dbReference type="InterPro" id="IPR013845">
    <property type="entry name" value="Ribosomal_eS4_central_region"/>
</dbReference>
<dbReference type="InterPro" id="IPR038237">
    <property type="entry name" value="Ribosomal_eS4_central_sf"/>
</dbReference>
<dbReference type="InterPro" id="IPR041982">
    <property type="entry name" value="Ribosomal_eS4_KOW"/>
</dbReference>
<dbReference type="InterPro" id="IPR002942">
    <property type="entry name" value="S4_RNA-bd"/>
</dbReference>
<dbReference type="InterPro" id="IPR036986">
    <property type="entry name" value="S4_RNA-bd_sf"/>
</dbReference>
<dbReference type="NCBIfam" id="NF003312">
    <property type="entry name" value="PRK04313.1"/>
    <property type="match status" value="1"/>
</dbReference>
<dbReference type="PANTHER" id="PTHR11581">
    <property type="entry name" value="30S/40S RIBOSOMAL PROTEIN S4"/>
    <property type="match status" value="1"/>
</dbReference>
<dbReference type="PANTHER" id="PTHR11581:SF0">
    <property type="entry name" value="SMALL RIBOSOMAL SUBUNIT PROTEIN ES4"/>
    <property type="match status" value="1"/>
</dbReference>
<dbReference type="Pfam" id="PF00900">
    <property type="entry name" value="Ribosomal_S4e"/>
    <property type="match status" value="1"/>
</dbReference>
<dbReference type="PIRSF" id="PIRSF002116">
    <property type="entry name" value="Ribosomal_S4"/>
    <property type="match status" value="1"/>
</dbReference>
<dbReference type="SMART" id="SM00363">
    <property type="entry name" value="S4"/>
    <property type="match status" value="1"/>
</dbReference>
<dbReference type="SUPFAM" id="SSF55174">
    <property type="entry name" value="Alpha-L RNA-binding motif"/>
    <property type="match status" value="1"/>
</dbReference>
<dbReference type="PROSITE" id="PS50889">
    <property type="entry name" value="S4"/>
    <property type="match status" value="1"/>
</dbReference>
<evidence type="ECO:0000305" key="1"/>
<evidence type="ECO:0007829" key="2">
    <source>
        <dbReference type="PDB" id="3KBG"/>
    </source>
</evidence>
<organism>
    <name type="scientific">Thermoplasma acidophilum (strain ATCC 25905 / DSM 1728 / JCM 9062 / NBRC 15155 / AMRC-C165)</name>
    <dbReference type="NCBI Taxonomy" id="273075"/>
    <lineage>
        <taxon>Archaea</taxon>
        <taxon>Methanobacteriati</taxon>
        <taxon>Thermoplasmatota</taxon>
        <taxon>Thermoplasmata</taxon>
        <taxon>Thermoplasmatales</taxon>
        <taxon>Thermoplasmataceae</taxon>
        <taxon>Thermoplasma</taxon>
    </lineage>
</organism>
<accession>Q56230</accession>